<proteinExistence type="inferred from homology"/>
<gene>
    <name evidence="6" type="primary">MEIOSIN</name>
    <name type="synonym">BHMG1</name>
</gene>
<reference key="1">
    <citation type="journal article" date="2004" name="Nature">
        <title>The DNA sequence and biology of human chromosome 19.</title>
        <authorList>
            <person name="Grimwood J."/>
            <person name="Gordon L.A."/>
            <person name="Olsen A.S."/>
            <person name="Terry A."/>
            <person name="Schmutz J."/>
            <person name="Lamerdin J.E."/>
            <person name="Hellsten U."/>
            <person name="Goodstein D."/>
            <person name="Couronne O."/>
            <person name="Tran-Gyamfi M."/>
            <person name="Aerts A."/>
            <person name="Altherr M."/>
            <person name="Ashworth L."/>
            <person name="Bajorek E."/>
            <person name="Black S."/>
            <person name="Branscomb E."/>
            <person name="Caenepeel S."/>
            <person name="Carrano A.V."/>
            <person name="Caoile C."/>
            <person name="Chan Y.M."/>
            <person name="Christensen M."/>
            <person name="Cleland C.A."/>
            <person name="Copeland A."/>
            <person name="Dalin E."/>
            <person name="Dehal P."/>
            <person name="Denys M."/>
            <person name="Detter J.C."/>
            <person name="Escobar J."/>
            <person name="Flowers D."/>
            <person name="Fotopulos D."/>
            <person name="Garcia C."/>
            <person name="Georgescu A.M."/>
            <person name="Glavina T."/>
            <person name="Gomez M."/>
            <person name="Gonzales E."/>
            <person name="Groza M."/>
            <person name="Hammon N."/>
            <person name="Hawkins T."/>
            <person name="Haydu L."/>
            <person name="Ho I."/>
            <person name="Huang W."/>
            <person name="Israni S."/>
            <person name="Jett J."/>
            <person name="Kadner K."/>
            <person name="Kimball H."/>
            <person name="Kobayashi A."/>
            <person name="Larionov V."/>
            <person name="Leem S.-H."/>
            <person name="Lopez F."/>
            <person name="Lou Y."/>
            <person name="Lowry S."/>
            <person name="Malfatti S."/>
            <person name="Martinez D."/>
            <person name="McCready P.M."/>
            <person name="Medina C."/>
            <person name="Morgan J."/>
            <person name="Nelson K."/>
            <person name="Nolan M."/>
            <person name="Ovcharenko I."/>
            <person name="Pitluck S."/>
            <person name="Pollard M."/>
            <person name="Popkie A.P."/>
            <person name="Predki P."/>
            <person name="Quan G."/>
            <person name="Ramirez L."/>
            <person name="Rash S."/>
            <person name="Retterer J."/>
            <person name="Rodriguez A."/>
            <person name="Rogers S."/>
            <person name="Salamov A."/>
            <person name="Salazar A."/>
            <person name="She X."/>
            <person name="Smith D."/>
            <person name="Slezak T."/>
            <person name="Solovyev V."/>
            <person name="Thayer N."/>
            <person name="Tice H."/>
            <person name="Tsai M."/>
            <person name="Ustaszewska A."/>
            <person name="Vo N."/>
            <person name="Wagner M."/>
            <person name="Wheeler J."/>
            <person name="Wu K."/>
            <person name="Xie G."/>
            <person name="Yang J."/>
            <person name="Dubchak I."/>
            <person name="Furey T.S."/>
            <person name="DeJong P."/>
            <person name="Dickson M."/>
            <person name="Gordon D."/>
            <person name="Eichler E.E."/>
            <person name="Pennacchio L.A."/>
            <person name="Richardson P."/>
            <person name="Stubbs L."/>
            <person name="Rokhsar D.S."/>
            <person name="Myers R.M."/>
            <person name="Rubin E.M."/>
            <person name="Lucas S.M."/>
        </authorList>
    </citation>
    <scope>NUCLEOTIDE SEQUENCE [LARGE SCALE GENOMIC DNA]</scope>
</reference>
<evidence type="ECO:0000250" key="1">
    <source>
        <dbReference type="UniProtKB" id="A0A5K7RLP0"/>
    </source>
</evidence>
<evidence type="ECO:0000255" key="2">
    <source>
        <dbReference type="PROSITE-ProRule" id="PRU00267"/>
    </source>
</evidence>
<evidence type="ECO:0000255" key="3">
    <source>
        <dbReference type="PROSITE-ProRule" id="PRU00981"/>
    </source>
</evidence>
<evidence type="ECO:0000256" key="4">
    <source>
        <dbReference type="SAM" id="MobiDB-lite"/>
    </source>
</evidence>
<evidence type="ECO:0000305" key="5"/>
<evidence type="ECO:0000312" key="6">
    <source>
        <dbReference type="HGNC" id="HGNC:44318"/>
    </source>
</evidence>
<keyword id="KW-0238">DNA-binding</keyword>
<keyword id="KW-0469">Meiosis</keyword>
<keyword id="KW-0539">Nucleus</keyword>
<keyword id="KW-1185">Reference proteome</keyword>
<keyword id="KW-0804">Transcription</keyword>
<keyword id="KW-0805">Transcription regulation</keyword>
<protein>
    <recommendedName>
        <fullName evidence="5">Meiosis initiator protein</fullName>
    </recommendedName>
    <alternativeName>
        <fullName>Basic helix-loop-helix and HMG box domain-containing protein 1</fullName>
    </alternativeName>
</protein>
<dbReference type="EMBL" id="AC007774">
    <property type="status" value="NOT_ANNOTATED_CDS"/>
    <property type="molecule type" value="Genomic_DNA"/>
</dbReference>
<dbReference type="EMBL" id="AC074212">
    <property type="status" value="NOT_ANNOTATED_CDS"/>
    <property type="molecule type" value="Genomic_DNA"/>
</dbReference>
<dbReference type="CCDS" id="CCDS82368.1"/>
<dbReference type="RefSeq" id="NP_001297053.1">
    <property type="nucleotide sequence ID" value="NM_001310124.2"/>
</dbReference>
<dbReference type="SMR" id="C9JSJ3"/>
<dbReference type="FunCoup" id="C9JSJ3">
    <property type="interactions" value="379"/>
</dbReference>
<dbReference type="STRING" id="9606.ENSP00000402674"/>
<dbReference type="GlyGen" id="C9JSJ3">
    <property type="glycosylation" value="2 sites, 1 O-linked glycan (1 site)"/>
</dbReference>
<dbReference type="iPTMnet" id="C9JSJ3"/>
<dbReference type="PhosphoSitePlus" id="C9JSJ3"/>
<dbReference type="BioMuta" id="BHMG1"/>
<dbReference type="jPOST" id="C9JSJ3"/>
<dbReference type="MassIVE" id="C9JSJ3"/>
<dbReference type="PaxDb" id="9606-ENSP00000402674"/>
<dbReference type="PeptideAtlas" id="C9JSJ3"/>
<dbReference type="Antibodypedia" id="65055">
    <property type="antibodies" value="12 antibodies from 4 providers"/>
</dbReference>
<dbReference type="DNASU" id="388553"/>
<dbReference type="Ensembl" id="ENST00000457052.3">
    <property type="protein sequence ID" value="ENSP00000402674.3"/>
    <property type="gene ID" value="ENSG00000237452.3"/>
</dbReference>
<dbReference type="GeneID" id="388553"/>
<dbReference type="KEGG" id="hsa:388553"/>
<dbReference type="MANE-Select" id="ENST00000457052.3">
    <property type="protein sequence ID" value="ENSP00000402674.3"/>
    <property type="RefSeq nucleotide sequence ID" value="NM_001310124.2"/>
    <property type="RefSeq protein sequence ID" value="NP_001297053.1"/>
</dbReference>
<dbReference type="UCSC" id="uc021uwa.2">
    <property type="organism name" value="human"/>
</dbReference>
<dbReference type="AGR" id="HGNC:44318"/>
<dbReference type="CTD" id="388553"/>
<dbReference type="DisGeNET" id="388553"/>
<dbReference type="GeneCards" id="MEIOSIN"/>
<dbReference type="HGNC" id="HGNC:44318">
    <property type="gene designation" value="MEIOSIN"/>
</dbReference>
<dbReference type="HPA" id="ENSG00000237452">
    <property type="expression patterns" value="Tissue enriched (testis)"/>
</dbReference>
<dbReference type="neXtProt" id="NX_C9JSJ3"/>
<dbReference type="OpenTargets" id="ENSG00000237452"/>
<dbReference type="VEuPathDB" id="HostDB:ENSG00000237452"/>
<dbReference type="eggNOG" id="KOG0527">
    <property type="taxonomic scope" value="Eukaryota"/>
</dbReference>
<dbReference type="GeneTree" id="ENSGT00570000080851"/>
<dbReference type="HOGENOM" id="CLU_428906_0_0_1"/>
<dbReference type="InParanoid" id="C9JSJ3"/>
<dbReference type="OMA" id="RRPYCIK"/>
<dbReference type="OrthoDB" id="1919336at2759"/>
<dbReference type="PAN-GO" id="C9JSJ3">
    <property type="GO annotations" value="0 GO annotations based on evolutionary models"/>
</dbReference>
<dbReference type="PathwayCommons" id="C9JSJ3"/>
<dbReference type="BioGRID-ORCS" id="388553">
    <property type="hits" value="0 hits in 36 CRISPR screens"/>
</dbReference>
<dbReference type="ChiTaRS" id="BHMG1">
    <property type="organism name" value="human"/>
</dbReference>
<dbReference type="GenomeRNAi" id="388553"/>
<dbReference type="Pharos" id="C9JSJ3">
    <property type="development level" value="Tdark"/>
</dbReference>
<dbReference type="PRO" id="PR:C9JSJ3"/>
<dbReference type="Proteomes" id="UP000005640">
    <property type="component" value="Chromosome 19"/>
</dbReference>
<dbReference type="RNAct" id="C9JSJ3">
    <property type="molecule type" value="protein"/>
</dbReference>
<dbReference type="Bgee" id="ENSG00000237452">
    <property type="expression patterns" value="Expressed in right testis and 4 other cell types or tissues"/>
</dbReference>
<dbReference type="GO" id="GO:0005634">
    <property type="term" value="C:nucleus"/>
    <property type="evidence" value="ECO:0000250"/>
    <property type="project" value="UniProtKB"/>
</dbReference>
<dbReference type="GO" id="GO:0003677">
    <property type="term" value="F:DNA binding"/>
    <property type="evidence" value="ECO:0007669"/>
    <property type="project" value="UniProtKB-KW"/>
</dbReference>
<dbReference type="GO" id="GO:0046983">
    <property type="term" value="F:protein dimerization activity"/>
    <property type="evidence" value="ECO:0007669"/>
    <property type="project" value="InterPro"/>
</dbReference>
<dbReference type="GO" id="GO:0090427">
    <property type="term" value="P:activation of meiosis"/>
    <property type="evidence" value="ECO:0000250"/>
    <property type="project" value="UniProtKB"/>
</dbReference>
<dbReference type="GO" id="GO:0071300">
    <property type="term" value="P:cellular response to retinoic acid"/>
    <property type="evidence" value="ECO:0000250"/>
    <property type="project" value="UniProtKB"/>
</dbReference>
<dbReference type="GO" id="GO:0051321">
    <property type="term" value="P:meiotic cell cycle"/>
    <property type="evidence" value="ECO:0000250"/>
    <property type="project" value="UniProtKB"/>
</dbReference>
<dbReference type="GO" id="GO:0048477">
    <property type="term" value="P:oogenesis"/>
    <property type="evidence" value="ECO:0000250"/>
    <property type="project" value="UniProtKB"/>
</dbReference>
<dbReference type="GO" id="GO:0006357">
    <property type="term" value="P:regulation of transcription by RNA polymerase II"/>
    <property type="evidence" value="ECO:0000250"/>
    <property type="project" value="UniProtKB"/>
</dbReference>
<dbReference type="GO" id="GO:0007283">
    <property type="term" value="P:spermatogenesis"/>
    <property type="evidence" value="ECO:0000250"/>
    <property type="project" value="UniProtKB"/>
</dbReference>
<dbReference type="CDD" id="cd21977">
    <property type="entry name" value="HMG-box_BHMG1"/>
    <property type="match status" value="1"/>
</dbReference>
<dbReference type="Gene3D" id="1.10.30.10">
    <property type="entry name" value="High mobility group box domain"/>
    <property type="match status" value="1"/>
</dbReference>
<dbReference type="InterPro" id="IPR011598">
    <property type="entry name" value="bHLH_dom"/>
</dbReference>
<dbReference type="InterPro" id="IPR036638">
    <property type="entry name" value="HLH_DNA-bd_sf"/>
</dbReference>
<dbReference type="InterPro" id="IPR009071">
    <property type="entry name" value="HMG_box_dom"/>
</dbReference>
<dbReference type="InterPro" id="IPR036910">
    <property type="entry name" value="HMG_box_dom_sf"/>
</dbReference>
<dbReference type="PANTHER" id="PTHR47658">
    <property type="entry name" value="HIGH MOBILITY GROUP B PROTEIN 12-RELATED"/>
    <property type="match status" value="1"/>
</dbReference>
<dbReference type="PANTHER" id="PTHR47658:SF1">
    <property type="entry name" value="MEIOSIS INITIATOR PROTEIN"/>
    <property type="match status" value="1"/>
</dbReference>
<dbReference type="Pfam" id="PF00010">
    <property type="entry name" value="HLH"/>
    <property type="match status" value="1"/>
</dbReference>
<dbReference type="Pfam" id="PF00505">
    <property type="entry name" value="HMG_box"/>
    <property type="match status" value="1"/>
</dbReference>
<dbReference type="SMART" id="SM00398">
    <property type="entry name" value="HMG"/>
    <property type="match status" value="1"/>
</dbReference>
<dbReference type="SUPFAM" id="SSF47459">
    <property type="entry name" value="HLH, helix-loop-helix DNA-binding domain"/>
    <property type="match status" value="1"/>
</dbReference>
<dbReference type="SUPFAM" id="SSF47095">
    <property type="entry name" value="HMG-box"/>
    <property type="match status" value="1"/>
</dbReference>
<dbReference type="PROSITE" id="PS50888">
    <property type="entry name" value="BHLH"/>
    <property type="match status" value="1"/>
</dbReference>
<dbReference type="PROSITE" id="PS50118">
    <property type="entry name" value="HMG_BOX_2"/>
    <property type="match status" value="1"/>
</dbReference>
<organism>
    <name type="scientific">Homo sapiens</name>
    <name type="common">Human</name>
    <dbReference type="NCBI Taxonomy" id="9606"/>
    <lineage>
        <taxon>Eukaryota</taxon>
        <taxon>Metazoa</taxon>
        <taxon>Chordata</taxon>
        <taxon>Craniata</taxon>
        <taxon>Vertebrata</taxon>
        <taxon>Euteleostomi</taxon>
        <taxon>Mammalia</taxon>
        <taxon>Eutheria</taxon>
        <taxon>Euarchontoglires</taxon>
        <taxon>Primates</taxon>
        <taxon>Haplorrhini</taxon>
        <taxon>Catarrhini</taxon>
        <taxon>Hominidae</taxon>
        <taxon>Homo</taxon>
    </lineage>
</organism>
<accession>C9JSJ3</accession>
<sequence>MFGSSRYLGSSEQPRANSLGPSDRTLVLCSLVEGEDKVNPSEPHGLRMEEKWLLKGKLRNQRNQNKLLSPNKKQRKNHTSKLQELALLLPIALKTGTKKLTKKEILVHVLQYIQYLQRNIDAAKALFKCHITTGEGGLAGLGQKPAWGPARRRRHSTPSSSPSSQKSCLQGACQKPRKKKLTQASESQTRTPKPRRSLALNKPEKLVAPSPDQKGSGTGGTTTPPRCPDSCGHPRPASSSPPGDRKGGQSQLTLLDLAEDTIHCDISSCWCQGSVQDDAPFPALLAQEDVARIHFLNKTQPHPRQKLVFYDSSEDVDKGSLDADPWLPAWTPENSPQGSPLFLGPPQIDVWSGTGHPSEILGLSPSLFSSPGKLLPDEILEDDMEYLTQAAFFEEVCLDLESSPSAYTQEAPQEKDTASKAPKDPPESHSLHRSSVSLDHCYLSLSGNSKAPSSSSSSSSSSSSSEDSDSEPLWKQREDMQANPVGTPGSSEEDEDTTWTPTRLASPLLAAEKKATKGQVARAPVKPKEKKKGPCPPQMKKKCVNGFIMFCRMNRKQYIRSCPGTASTAATKELAQLWRVMTQQERRPYCTKARRFSRQHNRIVKQDGSSSEAEDWETPKPFYQLLAEKALPLPPHLQ</sequence>
<name>MEIOS_HUMAN</name>
<comment type="function">
    <text evidence="1">Gatekeeper of meiotic initiation in both male and female germ cells. In complex with STRA8, directly activates the transcription of a subset of critical meiotic genes playing a central role in cell-cycle switching from mitosis to meiosis. Temporal expression of MEIOSIN is required for meiotic entry decision.</text>
</comment>
<comment type="subunit">
    <text evidence="1">Interacts with STRA8.</text>
</comment>
<comment type="subcellular location">
    <subcellularLocation>
        <location evidence="1">Nucleus</location>
    </subcellularLocation>
</comment>
<comment type="caution">
    <text evidence="3">Contains a degenerate basic motif not likely to bind DNA.</text>
</comment>
<feature type="chain" id="PRO_0000430831" description="Meiosis initiator protein">
    <location>
        <begin position="1"/>
        <end position="638"/>
    </location>
</feature>
<feature type="domain" description="bHLH" evidence="3">
    <location>
        <begin position="62"/>
        <end position="116"/>
    </location>
</feature>
<feature type="DNA-binding region" description="HMG box" evidence="2">
    <location>
        <begin position="540"/>
        <end position="608"/>
    </location>
</feature>
<feature type="region of interest" description="Disordered" evidence="4">
    <location>
        <begin position="1"/>
        <end position="21"/>
    </location>
</feature>
<feature type="region of interest" description="Disordered" evidence="4">
    <location>
        <begin position="60"/>
        <end position="79"/>
    </location>
</feature>
<feature type="region of interest" description="Basic motif; degenerate" evidence="3">
    <location>
        <begin position="62"/>
        <end position="75"/>
    </location>
</feature>
<feature type="region of interest" description="Helix-loop-helix motif" evidence="3">
    <location>
        <begin position="76"/>
        <end position="116"/>
    </location>
</feature>
<feature type="region of interest" description="Disordered" evidence="4">
    <location>
        <begin position="138"/>
        <end position="249"/>
    </location>
</feature>
<feature type="region of interest" description="Disordered" evidence="4">
    <location>
        <begin position="404"/>
        <end position="433"/>
    </location>
</feature>
<feature type="region of interest" description="Disordered" evidence="4">
    <location>
        <begin position="447"/>
        <end position="537"/>
    </location>
</feature>
<feature type="compositionally biased region" description="Polar residues" evidence="4">
    <location>
        <begin position="7"/>
        <end position="20"/>
    </location>
</feature>
<feature type="compositionally biased region" description="Low complexity" evidence="4">
    <location>
        <begin position="157"/>
        <end position="167"/>
    </location>
</feature>
<feature type="compositionally biased region" description="Polar residues" evidence="4">
    <location>
        <begin position="182"/>
        <end position="191"/>
    </location>
</feature>
<feature type="compositionally biased region" description="Basic and acidic residues" evidence="4">
    <location>
        <begin position="412"/>
        <end position="430"/>
    </location>
</feature>
<feature type="compositionally biased region" description="Low complexity" evidence="4">
    <location>
        <begin position="453"/>
        <end position="465"/>
    </location>
</feature>
<feature type="compositionally biased region" description="Basic residues" evidence="4">
    <location>
        <begin position="528"/>
        <end position="537"/>
    </location>
</feature>